<protein>
    <recommendedName>
        <fullName>Defensin Tk-AMP-D2</fullName>
    </recommendedName>
</protein>
<keyword id="KW-0929">Antimicrobial</keyword>
<keyword id="KW-0903">Direct protein sequencing</keyword>
<keyword id="KW-1015">Disulfide bond</keyword>
<keyword id="KW-0295">Fungicide</keyword>
<keyword id="KW-0611">Plant defense</keyword>
<proteinExistence type="evidence at protein level"/>
<accession>P84968</accession>
<evidence type="ECO:0000250" key="1">
    <source>
        <dbReference type="UniProtKB" id="Q8GTM0"/>
    </source>
</evidence>
<evidence type="ECO:0000269" key="2">
    <source>
    </source>
</evidence>
<evidence type="ECO:0000305" key="3"/>
<name>DEF2_TRIKH</name>
<comment type="function">
    <text evidence="1">Plant defense peptide.</text>
</comment>
<comment type="mass spectrometry" mass="5691.0" method="MALDI" evidence="2"/>
<comment type="similarity">
    <text evidence="3">Belongs to the DEFL family.</text>
</comment>
<sequence length="49" mass="5699">RTCESQSHKFKGPCFSDSNCATVCRTENFPRGQCNQHHVERKCYCERSC</sequence>
<reference evidence="3" key="1">
    <citation type="journal article" date="2007" name="Biochimie">
        <title>Seed defensins from T. kiharae and related species: Genome localization of defensin-encoding genes.</title>
        <authorList>
            <person name="Odintsova T.I."/>
            <person name="Egorov T.A."/>
            <person name="Musolyamov A.K."/>
            <person name="Odintsova M.S."/>
            <person name="Pukhalsky V.A."/>
            <person name="Grishin E.V."/>
        </authorList>
    </citation>
    <scope>PROTEIN SEQUENCE</scope>
    <scope>MASS SPECTROMETRY</scope>
    <source>
        <tissue evidence="2">Seed</tissue>
    </source>
</reference>
<organism>
    <name type="scientific">Triticum kiharae</name>
    <name type="common">Wheat</name>
    <dbReference type="NCBI Taxonomy" id="376535"/>
    <lineage>
        <taxon>Eukaryota</taxon>
        <taxon>Viridiplantae</taxon>
        <taxon>Streptophyta</taxon>
        <taxon>Embryophyta</taxon>
        <taxon>Tracheophyta</taxon>
        <taxon>Spermatophyta</taxon>
        <taxon>Magnoliopsida</taxon>
        <taxon>Liliopsida</taxon>
        <taxon>Poales</taxon>
        <taxon>Poaceae</taxon>
        <taxon>BOP clade</taxon>
        <taxon>Pooideae</taxon>
        <taxon>Triticodae</taxon>
        <taxon>Triticeae</taxon>
        <taxon>Triticinae</taxon>
        <taxon>Triticum</taxon>
    </lineage>
</organism>
<dbReference type="SMR" id="P84968"/>
<dbReference type="GO" id="GO:0050832">
    <property type="term" value="P:defense response to fungus"/>
    <property type="evidence" value="ECO:0007669"/>
    <property type="project" value="UniProtKB-KW"/>
</dbReference>
<dbReference type="GO" id="GO:0031640">
    <property type="term" value="P:killing of cells of another organism"/>
    <property type="evidence" value="ECO:0007669"/>
    <property type="project" value="UniProtKB-KW"/>
</dbReference>
<dbReference type="CDD" id="cd00107">
    <property type="entry name" value="Knot1"/>
    <property type="match status" value="1"/>
</dbReference>
<dbReference type="Gene3D" id="3.30.30.10">
    <property type="entry name" value="Knottin, scorpion toxin-like"/>
    <property type="match status" value="1"/>
</dbReference>
<dbReference type="InterPro" id="IPR008176">
    <property type="entry name" value="Defensin_plant"/>
</dbReference>
<dbReference type="InterPro" id="IPR003614">
    <property type="entry name" value="Scorpion_toxin-like"/>
</dbReference>
<dbReference type="InterPro" id="IPR036574">
    <property type="entry name" value="Scorpion_toxin-like_sf"/>
</dbReference>
<dbReference type="Pfam" id="PF00304">
    <property type="entry name" value="Gamma-thionin"/>
    <property type="match status" value="1"/>
</dbReference>
<dbReference type="PRINTS" id="PR00288">
    <property type="entry name" value="PUROTHIONIN"/>
</dbReference>
<dbReference type="SMART" id="SM00505">
    <property type="entry name" value="Knot1"/>
    <property type="match status" value="1"/>
</dbReference>
<dbReference type="SUPFAM" id="SSF57095">
    <property type="entry name" value="Scorpion toxin-like"/>
    <property type="match status" value="1"/>
</dbReference>
<dbReference type="PROSITE" id="PS00940">
    <property type="entry name" value="GAMMA_THIONIN"/>
    <property type="match status" value="1"/>
</dbReference>
<feature type="chain" id="PRO_0000287890" description="Defensin Tk-AMP-D2">
    <location>
        <begin position="1"/>
        <end position="49"/>
    </location>
</feature>
<feature type="disulfide bond" evidence="1">
    <location>
        <begin position="3"/>
        <end position="49"/>
    </location>
</feature>
<feature type="disulfide bond" evidence="1">
    <location>
        <begin position="14"/>
        <end position="34"/>
    </location>
</feature>
<feature type="disulfide bond" evidence="1">
    <location>
        <begin position="20"/>
        <end position="43"/>
    </location>
</feature>
<feature type="disulfide bond" evidence="1">
    <location>
        <begin position="24"/>
        <end position="45"/>
    </location>
</feature>